<name>GBGT1_HUMAN</name>
<keyword id="KW-0025">Alternative splicing</keyword>
<keyword id="KW-0325">Glycoprotein</keyword>
<keyword id="KW-0328">Glycosyltransferase</keyword>
<keyword id="KW-0333">Golgi apparatus</keyword>
<keyword id="KW-0464">Manganese</keyword>
<keyword id="KW-0472">Membrane</keyword>
<keyword id="KW-0479">Metal-binding</keyword>
<keyword id="KW-1267">Proteomics identification</keyword>
<keyword id="KW-1185">Reference proteome</keyword>
<keyword id="KW-0735">Signal-anchor</keyword>
<keyword id="KW-0808">Transferase</keyword>
<keyword id="KW-0812">Transmembrane</keyword>
<keyword id="KW-1133">Transmembrane helix</keyword>
<comment type="function">
    <text evidence="4 11">Has lost the ability to synthesize Forssman glycolipid antigen (FORS1/FG) (PubMed:10506200). Might have acquired an alternative function in glycosphingolipid metabolism, but it remains to be established. It appears to have drifted more slowly than confirmed pseudogenes in the glycosyltransferase 6 family, suggesting that it has remained under evolutionary pressure.</text>
</comment>
<comment type="cofactor">
    <cofactor evidence="2">
        <name>Mn(2+)</name>
        <dbReference type="ChEBI" id="CHEBI:29035"/>
    </cofactor>
    <text evidence="2">Binds 1 Mn(2+) ion per subunit.</text>
</comment>
<comment type="pathway">
    <text>Protein modification; protein glycosylation.</text>
</comment>
<comment type="subcellular location">
    <subcellularLocation>
        <location evidence="11">Golgi apparatus membrane</location>
        <topology evidence="11">Single-pass type II membrane protein</topology>
    </subcellularLocation>
</comment>
<comment type="alternative products">
    <event type="alternative splicing"/>
    <isoform>
        <id>Q8N5D6-1</id>
        <name>1</name>
        <sequence type="displayed"/>
    </isoform>
    <isoform>
        <id>Q8N5D6-2</id>
        <name>2</name>
        <sequence type="described" ref="VSP_013750"/>
    </isoform>
    <isoform>
        <id>Q8N5D6-3</id>
        <name>3</name>
        <sequence type="described" ref="VSP_055375"/>
    </isoform>
</comment>
<comment type="tissue specificity">
    <text evidence="4 8">Widely expressed. Expressed at higher level in placenta, ovary and peripheral blood leukocyte, whereas it is weakly expressed in liver, thymus, and testis (PubMed:10506200). Expressed in bone marrow erythroid cells (PubMed:23255552).</text>
</comment>
<comment type="domain">
    <text evidence="1">The conserved DXD motif is involved in cofactor binding. The manganese ion interacts with the beta-phosphate group of UDP and may also have a role in catalysis (By similarity).</text>
</comment>
<comment type="polymorphism">
    <text evidence="8">Common alleles GBGT1*01N.01 and GBGT1*01N.02 do not synthesize Forssman glycolipid antigen (FORS1). A rare allele encoding an arginine to glutamine change at residue 296 is associated with the ability to synthesize Forssman antigen, which is expressed in erythrocytes and is inheritable, thus defining a new histo-blood group FORS, also known as Apae. This variation might have arised as a consequence of the selective pressure exerted by microorganisms. For instance, the uropathogenic E.coli expressing prsG adhesin only binds and agglutinates FORS1-expressing erythrocytes. Thus, FORS1-positive individuals might be more susceptible to certain pathogens.</text>
</comment>
<comment type="similarity">
    <text evidence="11">Belongs to the glycosyltransferase 6 family.</text>
</comment>
<comment type="caution">
    <text evidence="12 13">The Forssman antigen (FORS1) is normally expressed on erythrocytes of some non-primate mammals. However, in rare cases it is expressed on human erythrocytes of histo-blood group FORS carriers.</text>
</comment>
<comment type="online information" name="Functional Glycomics Gateway - GTase">
    <link uri="http://www.functionalglycomics.org/glycomics/molecule/jsp/glycoEnzyme/viewGlycoEnzyme.jsp?gbpId=gt_hum_479"/>
    <text>Globoside alpha-1,3-N-acetylgalactosaminyltransferase 1</text>
</comment>
<sequence length="347" mass="40127">MHRRRLALGLGFCLLAGTSLSVLWVYLENWLPVSYVPYYLPCPEIFNMKLHYKREKPLQPVVWSQYPQPKLLEHRPTQLLTLTPWLAPIVSEGTFNPELLQHIYQPLNLTIGVTVFAVGKYTHFIQSFLESAEEFFMRGYRVHYYIFTDNPAAVPGVPLGPHRLLSSIPIQGHSHWEETSMRRMETISQHIAKRAHREVDYLFCLDVDMVFRNPWGPETLGDLVAAIHPSYYAVPRQQFPYERRRVSTAFVADSEGDFYYGGAVFGGQVARVYEFTRGCHMAILADKANGIMAAWREESHLNRHFISNKPSKVLSPEYLWDDRKPQPPSLKLIRFSTLDKDISCLRS</sequence>
<proteinExistence type="evidence at protein level"/>
<reference key="1">
    <citation type="journal article" date="1999" name="J. Biol. Chem.">
        <title>Characterization of the human Forssman synthetase gene: an evolving association between glycolipid synthesis and host-microbial interactions.</title>
        <authorList>
            <person name="Xu H."/>
            <person name="Storch T."/>
            <person name="Yu M."/>
            <person name="Elliott S.P."/>
            <person name="Haslam D.B."/>
        </authorList>
    </citation>
    <scope>NUCLEOTIDE SEQUENCE [MRNA] (ISOFORM 1)</scope>
    <scope>LACK OF FORSSMAN SYNTHASE ACTIVITY</scope>
    <scope>TISSUE SPECIFICITY</scope>
    <source>
        <tissue>Substantia nigra</tissue>
    </source>
</reference>
<reference key="2">
    <citation type="journal article" date="2003" name="Genome Res.">
        <title>The secreted protein discovery initiative (SPDI), a large-scale effort to identify novel human secreted and transmembrane proteins: a bioinformatics assessment.</title>
        <authorList>
            <person name="Clark H.F."/>
            <person name="Gurney A.L."/>
            <person name="Abaya E."/>
            <person name="Baker K."/>
            <person name="Baldwin D.T."/>
            <person name="Brush J."/>
            <person name="Chen J."/>
            <person name="Chow B."/>
            <person name="Chui C."/>
            <person name="Crowley C."/>
            <person name="Currell B."/>
            <person name="Deuel B."/>
            <person name="Dowd P."/>
            <person name="Eaton D."/>
            <person name="Foster J.S."/>
            <person name="Grimaldi C."/>
            <person name="Gu Q."/>
            <person name="Hass P.E."/>
            <person name="Heldens S."/>
            <person name="Huang A."/>
            <person name="Kim H.S."/>
            <person name="Klimowski L."/>
            <person name="Jin Y."/>
            <person name="Johnson S."/>
            <person name="Lee J."/>
            <person name="Lewis L."/>
            <person name="Liao D."/>
            <person name="Mark M.R."/>
            <person name="Robbie E."/>
            <person name="Sanchez C."/>
            <person name="Schoenfeld J."/>
            <person name="Seshagiri S."/>
            <person name="Simmons L."/>
            <person name="Singh J."/>
            <person name="Smith V."/>
            <person name="Stinson J."/>
            <person name="Vagts A."/>
            <person name="Vandlen R.L."/>
            <person name="Watanabe C."/>
            <person name="Wieand D."/>
            <person name="Woods K."/>
            <person name="Xie M.-H."/>
            <person name="Yansura D.G."/>
            <person name="Yi S."/>
            <person name="Yu G."/>
            <person name="Yuan J."/>
            <person name="Zhang M."/>
            <person name="Zhang Z."/>
            <person name="Goddard A.D."/>
            <person name="Wood W.I."/>
            <person name="Godowski P.J."/>
            <person name="Gray A.M."/>
        </authorList>
    </citation>
    <scope>NUCLEOTIDE SEQUENCE [LARGE SCALE MRNA] (ISOFORM 1)</scope>
    <scope>VARIANT PHE-20</scope>
</reference>
<reference key="3">
    <citation type="journal article" date="2004" name="Nat. Genet.">
        <title>Complete sequencing and characterization of 21,243 full-length human cDNAs.</title>
        <authorList>
            <person name="Ota T."/>
            <person name="Suzuki Y."/>
            <person name="Nishikawa T."/>
            <person name="Otsuki T."/>
            <person name="Sugiyama T."/>
            <person name="Irie R."/>
            <person name="Wakamatsu A."/>
            <person name="Hayashi K."/>
            <person name="Sato H."/>
            <person name="Nagai K."/>
            <person name="Kimura K."/>
            <person name="Makita H."/>
            <person name="Sekine M."/>
            <person name="Obayashi M."/>
            <person name="Nishi T."/>
            <person name="Shibahara T."/>
            <person name="Tanaka T."/>
            <person name="Ishii S."/>
            <person name="Yamamoto J."/>
            <person name="Saito K."/>
            <person name="Kawai Y."/>
            <person name="Isono Y."/>
            <person name="Nakamura Y."/>
            <person name="Nagahari K."/>
            <person name="Murakami K."/>
            <person name="Yasuda T."/>
            <person name="Iwayanagi T."/>
            <person name="Wagatsuma M."/>
            <person name="Shiratori A."/>
            <person name="Sudo H."/>
            <person name="Hosoiri T."/>
            <person name="Kaku Y."/>
            <person name="Kodaira H."/>
            <person name="Kondo H."/>
            <person name="Sugawara M."/>
            <person name="Takahashi M."/>
            <person name="Kanda K."/>
            <person name="Yokoi T."/>
            <person name="Furuya T."/>
            <person name="Kikkawa E."/>
            <person name="Omura Y."/>
            <person name="Abe K."/>
            <person name="Kamihara K."/>
            <person name="Katsuta N."/>
            <person name="Sato K."/>
            <person name="Tanikawa M."/>
            <person name="Yamazaki M."/>
            <person name="Ninomiya K."/>
            <person name="Ishibashi T."/>
            <person name="Yamashita H."/>
            <person name="Murakawa K."/>
            <person name="Fujimori K."/>
            <person name="Tanai H."/>
            <person name="Kimata M."/>
            <person name="Watanabe M."/>
            <person name="Hiraoka S."/>
            <person name="Chiba Y."/>
            <person name="Ishida S."/>
            <person name="Ono Y."/>
            <person name="Takiguchi S."/>
            <person name="Watanabe S."/>
            <person name="Yosida M."/>
            <person name="Hotuta T."/>
            <person name="Kusano J."/>
            <person name="Kanehori K."/>
            <person name="Takahashi-Fujii A."/>
            <person name="Hara H."/>
            <person name="Tanase T.-O."/>
            <person name="Nomura Y."/>
            <person name="Togiya S."/>
            <person name="Komai F."/>
            <person name="Hara R."/>
            <person name="Takeuchi K."/>
            <person name="Arita M."/>
            <person name="Imose N."/>
            <person name="Musashino K."/>
            <person name="Yuuki H."/>
            <person name="Oshima A."/>
            <person name="Sasaki N."/>
            <person name="Aotsuka S."/>
            <person name="Yoshikawa Y."/>
            <person name="Matsunawa H."/>
            <person name="Ichihara T."/>
            <person name="Shiohata N."/>
            <person name="Sano S."/>
            <person name="Moriya S."/>
            <person name="Momiyama H."/>
            <person name="Satoh N."/>
            <person name="Takami S."/>
            <person name="Terashima Y."/>
            <person name="Suzuki O."/>
            <person name="Nakagawa S."/>
            <person name="Senoh A."/>
            <person name="Mizoguchi H."/>
            <person name="Goto Y."/>
            <person name="Shimizu F."/>
            <person name="Wakebe H."/>
            <person name="Hishigaki H."/>
            <person name="Watanabe T."/>
            <person name="Sugiyama A."/>
            <person name="Takemoto M."/>
            <person name="Kawakami B."/>
            <person name="Yamazaki M."/>
            <person name="Watanabe K."/>
            <person name="Kumagai A."/>
            <person name="Itakura S."/>
            <person name="Fukuzumi Y."/>
            <person name="Fujimori Y."/>
            <person name="Komiyama M."/>
            <person name="Tashiro H."/>
            <person name="Tanigami A."/>
            <person name="Fujiwara T."/>
            <person name="Ono T."/>
            <person name="Yamada K."/>
            <person name="Fujii Y."/>
            <person name="Ozaki K."/>
            <person name="Hirao M."/>
            <person name="Ohmori Y."/>
            <person name="Kawabata A."/>
            <person name="Hikiji T."/>
            <person name="Kobatake N."/>
            <person name="Inagaki H."/>
            <person name="Ikema Y."/>
            <person name="Okamoto S."/>
            <person name="Okitani R."/>
            <person name="Kawakami T."/>
            <person name="Noguchi S."/>
            <person name="Itoh T."/>
            <person name="Shigeta K."/>
            <person name="Senba T."/>
            <person name="Matsumura K."/>
            <person name="Nakajima Y."/>
            <person name="Mizuno T."/>
            <person name="Morinaga M."/>
            <person name="Sasaki M."/>
            <person name="Togashi T."/>
            <person name="Oyama M."/>
            <person name="Hata H."/>
            <person name="Watanabe M."/>
            <person name="Komatsu T."/>
            <person name="Mizushima-Sugano J."/>
            <person name="Satoh T."/>
            <person name="Shirai Y."/>
            <person name="Takahashi Y."/>
            <person name="Nakagawa K."/>
            <person name="Okumura K."/>
            <person name="Nagase T."/>
            <person name="Nomura N."/>
            <person name="Kikuchi H."/>
            <person name="Masuho Y."/>
            <person name="Yamashita R."/>
            <person name="Nakai K."/>
            <person name="Yada T."/>
            <person name="Nakamura Y."/>
            <person name="Ohara O."/>
            <person name="Isogai T."/>
            <person name="Sugano S."/>
        </authorList>
    </citation>
    <scope>NUCLEOTIDE SEQUENCE [LARGE SCALE MRNA] (ISOFORMS 1; 2 AND 3)</scope>
    <scope>VARIANT PHE-20</scope>
    <source>
        <tissue>Adrenal gland</tissue>
        <tissue>Embryo</tissue>
        <tissue>Lung</tissue>
    </source>
</reference>
<reference key="4">
    <citation type="submission" date="2005-07" db="EMBL/GenBank/DDBJ databases">
        <authorList>
            <consortium name="SeattleSNPs variation discovery resource"/>
        </authorList>
    </citation>
    <scope>NUCLEOTIDE SEQUENCE [GENOMIC DNA]</scope>
    <scope>VARIANTS PHE-20; GLY-21; PRO-79; TRP-163; ASN-200; PRO-238; ILE-248 AND PHE-291</scope>
</reference>
<reference key="5">
    <citation type="journal article" date="2004" name="Nature">
        <title>DNA sequence and analysis of human chromosome 9.</title>
        <authorList>
            <person name="Humphray S.J."/>
            <person name="Oliver K."/>
            <person name="Hunt A.R."/>
            <person name="Plumb R.W."/>
            <person name="Loveland J.E."/>
            <person name="Howe K.L."/>
            <person name="Andrews T.D."/>
            <person name="Searle S."/>
            <person name="Hunt S.E."/>
            <person name="Scott C.E."/>
            <person name="Jones M.C."/>
            <person name="Ainscough R."/>
            <person name="Almeida J.P."/>
            <person name="Ambrose K.D."/>
            <person name="Ashwell R.I.S."/>
            <person name="Babbage A.K."/>
            <person name="Babbage S."/>
            <person name="Bagguley C.L."/>
            <person name="Bailey J."/>
            <person name="Banerjee R."/>
            <person name="Barker D.J."/>
            <person name="Barlow K.F."/>
            <person name="Bates K."/>
            <person name="Beasley H."/>
            <person name="Beasley O."/>
            <person name="Bird C.P."/>
            <person name="Bray-Allen S."/>
            <person name="Brown A.J."/>
            <person name="Brown J.Y."/>
            <person name="Burford D."/>
            <person name="Burrill W."/>
            <person name="Burton J."/>
            <person name="Carder C."/>
            <person name="Carter N.P."/>
            <person name="Chapman J.C."/>
            <person name="Chen Y."/>
            <person name="Clarke G."/>
            <person name="Clark S.Y."/>
            <person name="Clee C.M."/>
            <person name="Clegg S."/>
            <person name="Collier R.E."/>
            <person name="Corby N."/>
            <person name="Crosier M."/>
            <person name="Cummings A.T."/>
            <person name="Davies J."/>
            <person name="Dhami P."/>
            <person name="Dunn M."/>
            <person name="Dutta I."/>
            <person name="Dyer L.W."/>
            <person name="Earthrowl M.E."/>
            <person name="Faulkner L."/>
            <person name="Fleming C.J."/>
            <person name="Frankish A."/>
            <person name="Frankland J.A."/>
            <person name="French L."/>
            <person name="Fricker D.G."/>
            <person name="Garner P."/>
            <person name="Garnett J."/>
            <person name="Ghori J."/>
            <person name="Gilbert J.G.R."/>
            <person name="Glison C."/>
            <person name="Grafham D.V."/>
            <person name="Gribble S."/>
            <person name="Griffiths C."/>
            <person name="Griffiths-Jones S."/>
            <person name="Grocock R."/>
            <person name="Guy J."/>
            <person name="Hall R.E."/>
            <person name="Hammond S."/>
            <person name="Harley J.L."/>
            <person name="Harrison E.S.I."/>
            <person name="Hart E.A."/>
            <person name="Heath P.D."/>
            <person name="Henderson C.D."/>
            <person name="Hopkins B.L."/>
            <person name="Howard P.J."/>
            <person name="Howden P.J."/>
            <person name="Huckle E."/>
            <person name="Johnson C."/>
            <person name="Johnson D."/>
            <person name="Joy A.A."/>
            <person name="Kay M."/>
            <person name="Keenan S."/>
            <person name="Kershaw J.K."/>
            <person name="Kimberley A.M."/>
            <person name="King A."/>
            <person name="Knights A."/>
            <person name="Laird G.K."/>
            <person name="Langford C."/>
            <person name="Lawlor S."/>
            <person name="Leongamornlert D.A."/>
            <person name="Leversha M."/>
            <person name="Lloyd C."/>
            <person name="Lloyd D.M."/>
            <person name="Lovell J."/>
            <person name="Martin S."/>
            <person name="Mashreghi-Mohammadi M."/>
            <person name="Matthews L."/>
            <person name="McLaren S."/>
            <person name="McLay K.E."/>
            <person name="McMurray A."/>
            <person name="Milne S."/>
            <person name="Nickerson T."/>
            <person name="Nisbett J."/>
            <person name="Nordsiek G."/>
            <person name="Pearce A.V."/>
            <person name="Peck A.I."/>
            <person name="Porter K.M."/>
            <person name="Pandian R."/>
            <person name="Pelan S."/>
            <person name="Phillimore B."/>
            <person name="Povey S."/>
            <person name="Ramsey Y."/>
            <person name="Rand V."/>
            <person name="Scharfe M."/>
            <person name="Sehra H.K."/>
            <person name="Shownkeen R."/>
            <person name="Sims S.K."/>
            <person name="Skuce C.D."/>
            <person name="Smith M."/>
            <person name="Steward C.A."/>
            <person name="Swarbreck D."/>
            <person name="Sycamore N."/>
            <person name="Tester J."/>
            <person name="Thorpe A."/>
            <person name="Tracey A."/>
            <person name="Tromans A."/>
            <person name="Thomas D.W."/>
            <person name="Wall M."/>
            <person name="Wallis J.M."/>
            <person name="West A.P."/>
            <person name="Whitehead S.L."/>
            <person name="Willey D.L."/>
            <person name="Williams S.A."/>
            <person name="Wilming L."/>
            <person name="Wray P.W."/>
            <person name="Young L."/>
            <person name="Ashurst J.L."/>
            <person name="Coulson A."/>
            <person name="Blocker H."/>
            <person name="Durbin R.M."/>
            <person name="Sulston J.E."/>
            <person name="Hubbard T."/>
            <person name="Jackson M.J."/>
            <person name="Bentley D.R."/>
            <person name="Beck S."/>
            <person name="Rogers J."/>
            <person name="Dunham I."/>
        </authorList>
    </citation>
    <scope>NUCLEOTIDE SEQUENCE [LARGE SCALE GENOMIC DNA]</scope>
</reference>
<reference key="6">
    <citation type="submission" date="2005-07" db="EMBL/GenBank/DDBJ databases">
        <authorList>
            <person name="Mural R.J."/>
            <person name="Istrail S."/>
            <person name="Sutton G.G."/>
            <person name="Florea L."/>
            <person name="Halpern A.L."/>
            <person name="Mobarry C.M."/>
            <person name="Lippert R."/>
            <person name="Walenz B."/>
            <person name="Shatkay H."/>
            <person name="Dew I."/>
            <person name="Miller J.R."/>
            <person name="Flanigan M.J."/>
            <person name="Edwards N.J."/>
            <person name="Bolanos R."/>
            <person name="Fasulo D."/>
            <person name="Halldorsson B.V."/>
            <person name="Hannenhalli S."/>
            <person name="Turner R."/>
            <person name="Yooseph S."/>
            <person name="Lu F."/>
            <person name="Nusskern D.R."/>
            <person name="Shue B.C."/>
            <person name="Zheng X.H."/>
            <person name="Zhong F."/>
            <person name="Delcher A.L."/>
            <person name="Huson D.H."/>
            <person name="Kravitz S.A."/>
            <person name="Mouchard L."/>
            <person name="Reinert K."/>
            <person name="Remington K.A."/>
            <person name="Clark A.G."/>
            <person name="Waterman M.S."/>
            <person name="Eichler E.E."/>
            <person name="Adams M.D."/>
            <person name="Hunkapiller M.W."/>
            <person name="Myers E.W."/>
            <person name="Venter J.C."/>
        </authorList>
    </citation>
    <scope>NUCLEOTIDE SEQUENCE [LARGE SCALE GENOMIC DNA]</scope>
</reference>
<reference key="7">
    <citation type="journal article" date="2004" name="Genome Res.">
        <title>The status, quality, and expansion of the NIH full-length cDNA project: the Mammalian Gene Collection (MGC).</title>
        <authorList>
            <consortium name="The MGC Project Team"/>
        </authorList>
    </citation>
    <scope>NUCLEOTIDE SEQUENCE [LARGE SCALE MRNA] (ISOFORM 1)</scope>
    <scope>VARIANT PHE-20</scope>
    <source>
        <tissue>Pancreas</tissue>
    </source>
</reference>
<reference key="8">
    <citation type="journal article" date="2013" name="Blood">
        <title>Forssman expression on human erythrocytes: biochemical and genetic evidence of a new histo-blood group system.</title>
        <authorList>
            <person name="Svensson L."/>
            <person name="Hult A.K."/>
            <person name="Stamps R."/>
            <person name="Aangstroem J."/>
            <person name="Teneberg S."/>
            <person name="Storry J.R."/>
            <person name="Joergensen R."/>
            <person name="Rydberg L."/>
            <person name="Henry S.M."/>
            <person name="Olsson M.L."/>
        </authorList>
    </citation>
    <scope>POLYMORPHISM</scope>
    <scope>TISSUE SPECIFICITY</scope>
    <scope>VARIANT GLN-296</scope>
    <scope>CHARACTERIZATION OF VARIANT GLN-296</scope>
</reference>
<accession>Q8N5D6</accession>
<accession>A8K633</accession>
<accession>B2RA95</accession>
<accession>B7Z8S5</accession>
<accession>Q45F07</accession>
<accession>Q5T7U9</accession>
<accession>Q5T7V1</accession>
<accession>Q8N2K4</accession>
<accession>Q9UKI5</accession>
<gene>
    <name evidence="14" type="primary">GBGT1</name>
    <name type="ORF">UNQ2513/PRO6002</name>
</gene>
<organism>
    <name type="scientific">Homo sapiens</name>
    <name type="common">Human</name>
    <dbReference type="NCBI Taxonomy" id="9606"/>
    <lineage>
        <taxon>Eukaryota</taxon>
        <taxon>Metazoa</taxon>
        <taxon>Chordata</taxon>
        <taxon>Craniata</taxon>
        <taxon>Vertebrata</taxon>
        <taxon>Euteleostomi</taxon>
        <taxon>Mammalia</taxon>
        <taxon>Eutheria</taxon>
        <taxon>Euarchontoglires</taxon>
        <taxon>Primates</taxon>
        <taxon>Haplorrhini</taxon>
        <taxon>Catarrhini</taxon>
        <taxon>Hominidae</taxon>
        <taxon>Homo</taxon>
    </lineage>
</organism>
<protein>
    <recommendedName>
        <fullName evidence="11">Globoside alpha-1,3-N-acetylgalactosaminyltransferase 1</fullName>
        <ecNumber evidence="8 12">2.4.1.-</ecNumber>
    </recommendedName>
    <alternativeName>
        <fullName>Forssman glycolipid synthase-like protein</fullName>
    </alternativeName>
</protein>
<evidence type="ECO:0000250" key="1"/>
<evidence type="ECO:0000250" key="2">
    <source>
        <dbReference type="UniProtKB" id="P14769"/>
    </source>
</evidence>
<evidence type="ECO:0000255" key="3"/>
<evidence type="ECO:0000269" key="4">
    <source>
    </source>
</evidence>
<evidence type="ECO:0000269" key="5">
    <source>
    </source>
</evidence>
<evidence type="ECO:0000269" key="6">
    <source>
    </source>
</evidence>
<evidence type="ECO:0000269" key="7">
    <source>
    </source>
</evidence>
<evidence type="ECO:0000269" key="8">
    <source>
    </source>
</evidence>
<evidence type="ECO:0000269" key="9">
    <source ref="4"/>
</evidence>
<evidence type="ECO:0000303" key="10">
    <source>
    </source>
</evidence>
<evidence type="ECO:0000305" key="11"/>
<evidence type="ECO:0000305" key="12">
    <source>
    </source>
</evidence>
<evidence type="ECO:0000305" key="13">
    <source>
    </source>
</evidence>
<evidence type="ECO:0000312" key="14">
    <source>
        <dbReference type="HGNC" id="HGNC:20460"/>
    </source>
</evidence>
<dbReference type="EC" id="2.4.1.-" evidence="8 12"/>
<dbReference type="EMBL" id="AF163572">
    <property type="protein sequence ID" value="AAF06145.1"/>
    <property type="molecule type" value="Transcribed_RNA"/>
</dbReference>
<dbReference type="EMBL" id="AY358175">
    <property type="protein sequence ID" value="AAQ88542.1"/>
    <property type="molecule type" value="mRNA"/>
</dbReference>
<dbReference type="EMBL" id="AK074639">
    <property type="protein sequence ID" value="BAC11106.1"/>
    <property type="molecule type" value="mRNA"/>
</dbReference>
<dbReference type="EMBL" id="AK291498">
    <property type="protein sequence ID" value="BAF84187.1"/>
    <property type="molecule type" value="mRNA"/>
</dbReference>
<dbReference type="EMBL" id="AK303825">
    <property type="protein sequence ID" value="BAH14061.1"/>
    <property type="molecule type" value="mRNA"/>
</dbReference>
<dbReference type="EMBL" id="AK314097">
    <property type="protein sequence ID" value="BAG36792.1"/>
    <property type="molecule type" value="mRNA"/>
</dbReference>
<dbReference type="EMBL" id="DQ145941">
    <property type="protein sequence ID" value="AAZ38721.1"/>
    <property type="molecule type" value="Genomic_DNA"/>
</dbReference>
<dbReference type="EMBL" id="AL162417">
    <property type="status" value="NOT_ANNOTATED_CDS"/>
    <property type="molecule type" value="Genomic_DNA"/>
</dbReference>
<dbReference type="EMBL" id="CH471090">
    <property type="protein sequence ID" value="EAW88045.1"/>
    <property type="molecule type" value="Genomic_DNA"/>
</dbReference>
<dbReference type="EMBL" id="BC032499">
    <property type="protein sequence ID" value="AAH32499.1"/>
    <property type="molecule type" value="mRNA"/>
</dbReference>
<dbReference type="CCDS" id="CCDS65175.1">
    <molecule id="Q8N5D6-3"/>
</dbReference>
<dbReference type="CCDS" id="CCDS65176.1">
    <molecule id="Q8N5D6-2"/>
</dbReference>
<dbReference type="CCDS" id="CCDS6960.1">
    <molecule id="Q8N5D6-1"/>
</dbReference>
<dbReference type="RefSeq" id="NP_001269558.1">
    <molecule id="Q8N5D6-2"/>
    <property type="nucleotide sequence ID" value="NM_001282629.2"/>
</dbReference>
<dbReference type="RefSeq" id="NP_001269561.1">
    <molecule id="Q8N5D6-3"/>
    <property type="nucleotide sequence ID" value="NM_001282632.2"/>
</dbReference>
<dbReference type="RefSeq" id="NP_001275501.1">
    <property type="nucleotide sequence ID" value="NM_001288572.1"/>
</dbReference>
<dbReference type="RefSeq" id="NP_001275502.1">
    <property type="nucleotide sequence ID" value="NM_001288573.1"/>
</dbReference>
<dbReference type="RefSeq" id="NP_068836.2">
    <molecule id="Q8N5D6-1"/>
    <property type="nucleotide sequence ID" value="NM_021996.5"/>
</dbReference>
<dbReference type="SMR" id="Q8N5D6"/>
<dbReference type="BioGRID" id="117677">
    <property type="interactions" value="2"/>
</dbReference>
<dbReference type="FunCoup" id="Q8N5D6">
    <property type="interactions" value="121"/>
</dbReference>
<dbReference type="IntAct" id="Q8N5D6">
    <property type="interactions" value="1"/>
</dbReference>
<dbReference type="STRING" id="9606.ENSP00000361110"/>
<dbReference type="CAZy" id="GT6">
    <property type="family name" value="Glycosyltransferase Family 6"/>
</dbReference>
<dbReference type="GlyCosmos" id="Q8N5D6">
    <property type="glycosylation" value="1 site, No reported glycans"/>
</dbReference>
<dbReference type="GlyGen" id="Q8N5D6">
    <property type="glycosylation" value="1 site"/>
</dbReference>
<dbReference type="iPTMnet" id="Q8N5D6"/>
<dbReference type="PhosphoSitePlus" id="Q8N5D6"/>
<dbReference type="BioMuta" id="GBGT1"/>
<dbReference type="DMDM" id="67464687"/>
<dbReference type="MassIVE" id="Q8N5D6"/>
<dbReference type="PaxDb" id="9606-ENSP00000361110"/>
<dbReference type="PeptideAtlas" id="Q8N5D6"/>
<dbReference type="ProteomicsDB" id="6977"/>
<dbReference type="ProteomicsDB" id="72044">
    <molecule id="Q8N5D6-1"/>
</dbReference>
<dbReference type="Antibodypedia" id="63936">
    <property type="antibodies" value="60 antibodies from 17 providers"/>
</dbReference>
<dbReference type="DNASU" id="26301"/>
<dbReference type="Ensembl" id="ENST00000372040.9">
    <molecule id="Q8N5D6-1"/>
    <property type="protein sequence ID" value="ENSP00000361110.3"/>
    <property type="gene ID" value="ENSG00000148288.13"/>
</dbReference>
<dbReference type="Ensembl" id="ENST00000372043.7">
    <molecule id="Q8N5D6-2"/>
    <property type="protein sequence ID" value="ENSP00000361113.3"/>
    <property type="gene ID" value="ENSG00000148288.13"/>
</dbReference>
<dbReference type="Ensembl" id="ENST00000540636.6">
    <molecule id="Q8N5D6-3"/>
    <property type="protein sequence ID" value="ENSP00000437663.1"/>
    <property type="gene ID" value="ENSG00000148288.13"/>
</dbReference>
<dbReference type="GeneID" id="26301"/>
<dbReference type="KEGG" id="hsa:26301"/>
<dbReference type="MANE-Select" id="ENST00000372040.9">
    <property type="protein sequence ID" value="ENSP00000361110.3"/>
    <property type="RefSeq nucleotide sequence ID" value="NM_021996.6"/>
    <property type="RefSeq protein sequence ID" value="NP_068836.2"/>
</dbReference>
<dbReference type="UCSC" id="uc004ccw.5">
    <molecule id="Q8N5D6-1"/>
    <property type="organism name" value="human"/>
</dbReference>
<dbReference type="AGR" id="HGNC:20460"/>
<dbReference type="CTD" id="26301"/>
<dbReference type="DisGeNET" id="26301"/>
<dbReference type="GeneCards" id="GBGT1"/>
<dbReference type="HGNC" id="HGNC:20460">
    <property type="gene designation" value="GBGT1"/>
</dbReference>
<dbReference type="HPA" id="ENSG00000148288">
    <property type="expression patterns" value="Low tissue specificity"/>
</dbReference>
<dbReference type="MIM" id="606074">
    <property type="type" value="gene"/>
</dbReference>
<dbReference type="neXtProt" id="NX_Q8N5D6"/>
<dbReference type="OpenTargets" id="ENSG00000148288"/>
<dbReference type="PharmGKB" id="PA134967297"/>
<dbReference type="VEuPathDB" id="HostDB:ENSG00000148288"/>
<dbReference type="eggNOG" id="ENOG502QQAJ">
    <property type="taxonomic scope" value="Eukaryota"/>
</dbReference>
<dbReference type="GeneTree" id="ENSGT00950000182858"/>
<dbReference type="HOGENOM" id="CLU_062445_0_1_1"/>
<dbReference type="InParanoid" id="Q8N5D6"/>
<dbReference type="OMA" id="RRLITHK"/>
<dbReference type="OrthoDB" id="10013941at2759"/>
<dbReference type="PAN-GO" id="Q8N5D6">
    <property type="GO annotations" value="4 GO annotations based on evolutionary models"/>
</dbReference>
<dbReference type="PhylomeDB" id="Q8N5D6"/>
<dbReference type="TreeFam" id="TF330991"/>
<dbReference type="BioCyc" id="MetaCyc:ENSG00000148288-MONOMER"/>
<dbReference type="BRENDA" id="2.4.1.88">
    <property type="organism ID" value="2681"/>
</dbReference>
<dbReference type="PathwayCommons" id="Q8N5D6"/>
<dbReference type="SignaLink" id="Q8N5D6"/>
<dbReference type="UniPathway" id="UPA00378"/>
<dbReference type="BioGRID-ORCS" id="26301">
    <property type="hits" value="39 hits in 1151 CRISPR screens"/>
</dbReference>
<dbReference type="GeneWiki" id="GBGT1"/>
<dbReference type="GenomeRNAi" id="26301"/>
<dbReference type="Pharos" id="Q8N5D6">
    <property type="development level" value="Tbio"/>
</dbReference>
<dbReference type="PRO" id="PR:Q8N5D6"/>
<dbReference type="Proteomes" id="UP000005640">
    <property type="component" value="Chromosome 9"/>
</dbReference>
<dbReference type="RNAct" id="Q8N5D6">
    <property type="molecule type" value="protein"/>
</dbReference>
<dbReference type="Bgee" id="ENSG00000148288">
    <property type="expression patterns" value="Expressed in body of stomach and 147 other cell types or tissues"/>
</dbReference>
<dbReference type="ExpressionAtlas" id="Q8N5D6">
    <property type="expression patterns" value="baseline and differential"/>
</dbReference>
<dbReference type="GO" id="GO:0005794">
    <property type="term" value="C:Golgi apparatus"/>
    <property type="evidence" value="ECO:0000318"/>
    <property type="project" value="GO_Central"/>
</dbReference>
<dbReference type="GO" id="GO:0000139">
    <property type="term" value="C:Golgi membrane"/>
    <property type="evidence" value="ECO:0007669"/>
    <property type="project" value="UniProtKB-SubCell"/>
</dbReference>
<dbReference type="GO" id="GO:0031982">
    <property type="term" value="C:vesicle"/>
    <property type="evidence" value="ECO:0000318"/>
    <property type="project" value="GO_Central"/>
</dbReference>
<dbReference type="GO" id="GO:0047277">
    <property type="term" value="F:globoside alpha-N-acetylgalactosaminyltransferase activity"/>
    <property type="evidence" value="ECO:0000318"/>
    <property type="project" value="GO_Central"/>
</dbReference>
<dbReference type="GO" id="GO:0046872">
    <property type="term" value="F:metal ion binding"/>
    <property type="evidence" value="ECO:0007669"/>
    <property type="project" value="UniProtKB-KW"/>
</dbReference>
<dbReference type="GO" id="GO:0005975">
    <property type="term" value="P:carbohydrate metabolic process"/>
    <property type="evidence" value="ECO:0007669"/>
    <property type="project" value="InterPro"/>
</dbReference>
<dbReference type="GO" id="GO:0009247">
    <property type="term" value="P:glycolipid biosynthetic process"/>
    <property type="evidence" value="ECO:0000304"/>
    <property type="project" value="ProtInc"/>
</dbReference>
<dbReference type="GO" id="GO:0030259">
    <property type="term" value="P:lipid glycosylation"/>
    <property type="evidence" value="ECO:0000318"/>
    <property type="project" value="GO_Central"/>
</dbReference>
<dbReference type="GO" id="GO:0006486">
    <property type="term" value="P:protein glycosylation"/>
    <property type="evidence" value="ECO:0007669"/>
    <property type="project" value="UniProtKB-UniPathway"/>
</dbReference>
<dbReference type="CDD" id="cd02515">
    <property type="entry name" value="Glyco_transf_6"/>
    <property type="match status" value="1"/>
</dbReference>
<dbReference type="FunFam" id="3.90.550.10:FF:000022">
    <property type="entry name" value="Histo-blood group ABO system transferase"/>
    <property type="match status" value="1"/>
</dbReference>
<dbReference type="Gene3D" id="3.90.550.10">
    <property type="entry name" value="Spore Coat Polysaccharide Biosynthesis Protein SpsA, Chain A"/>
    <property type="match status" value="1"/>
</dbReference>
<dbReference type="InterPro" id="IPR005076">
    <property type="entry name" value="Glyco_trans_6"/>
</dbReference>
<dbReference type="InterPro" id="IPR029044">
    <property type="entry name" value="Nucleotide-diphossugar_trans"/>
</dbReference>
<dbReference type="PANTHER" id="PTHR10462:SF49">
    <property type="entry name" value="GLOBOSIDE ALPHA-1,3-N-ACETYLGALACTOSAMINYLTRANSFERASE 1"/>
    <property type="match status" value="1"/>
</dbReference>
<dbReference type="PANTHER" id="PTHR10462">
    <property type="entry name" value="GLYCOSYLTRANSFERASE-RELATED"/>
    <property type="match status" value="1"/>
</dbReference>
<dbReference type="Pfam" id="PF03414">
    <property type="entry name" value="Glyco_transf_6"/>
    <property type="match status" value="1"/>
</dbReference>
<dbReference type="SUPFAM" id="SSF53448">
    <property type="entry name" value="Nucleotide-diphospho-sugar transferases"/>
    <property type="match status" value="1"/>
</dbReference>
<feature type="chain" id="PRO_0000157295" description="Globoside alpha-1,3-N-acetylgalactosaminyltransferase 1">
    <location>
        <begin position="1"/>
        <end position="347"/>
    </location>
</feature>
<feature type="topological domain" description="Cytoplasmic" evidence="3">
    <location>
        <begin position="1"/>
        <end position="5"/>
    </location>
</feature>
<feature type="transmembrane region" description="Helical; Signal-anchor for type II membrane protein" evidence="3">
    <location>
        <begin position="6"/>
        <end position="26"/>
    </location>
</feature>
<feature type="topological domain" description="Lumenal" evidence="3">
    <location>
        <begin position="27"/>
        <end position="347"/>
    </location>
</feature>
<feature type="active site" description="Nucleophile" evidence="2">
    <location>
        <position position="298"/>
    </location>
</feature>
<feature type="binding site" evidence="2">
    <location>
        <begin position="116"/>
        <end position="121"/>
    </location>
    <ligand>
        <name>substrate</name>
    </ligand>
</feature>
<feature type="binding site" evidence="2">
    <location>
        <begin position="206"/>
        <end position="208"/>
    </location>
    <ligand>
        <name>substrate</name>
    </ligand>
</feature>
<feature type="binding site" evidence="2">
    <location>
        <position position="206"/>
    </location>
    <ligand>
        <name>Mn(2+)</name>
        <dbReference type="ChEBI" id="CHEBI:29035"/>
    </ligand>
</feature>
<feature type="binding site" evidence="2">
    <location>
        <position position="208"/>
    </location>
    <ligand>
        <name>Mn(2+)</name>
        <dbReference type="ChEBI" id="CHEBI:29035"/>
    </ligand>
</feature>
<feature type="binding site" evidence="2">
    <location>
        <begin position="228"/>
        <end position="231"/>
    </location>
    <ligand>
        <name>substrate</name>
    </ligand>
</feature>
<feature type="glycosylation site" description="N-linked (GlcNAc...) asparagine" evidence="3">
    <location>
        <position position="108"/>
    </location>
</feature>
<feature type="splice variant" id="VSP_055375" description="In isoform 3." evidence="10">
    <original>FNMKLHYKREKPLQPVVW</original>
    <variation>L</variation>
    <location>
        <begin position="46"/>
        <end position="63"/>
    </location>
</feature>
<feature type="splice variant" id="VSP_013750" description="In isoform 2." evidence="10">
    <original>KYTHFIQSFLESAEEFFMRGYRVHYYIFTDNPAAVPGVPLGPHRLLSSIPIQGHSHWEETSMRRMETISQHIAKRAHREVDYLFCLDVDMVFRNPWGPETLGDLVAAIHPSYYAVPRQQFPYERRRVSTAFVADSEGDFYYGGAVFGGQVARVYEFTRGCHMAILADKANGIMAAWREESHLNRHFISNKPSKVLSPEYLWDDRKPQPPSLKLIRFSTLDKDISCLRS</original>
    <variation>NPSWSQPRSSSCVGTGCTTTSSLTTLQPFPGSRWVPTGFSAPSPSRVTPTGRRHPCAGWRPSASTLLRGLTGRWTTSSALMWTWCFGTRGALRPWETWWLPFTQATTPFPASSSPMSAGVFPLPLWQTAKGTSIMVGQSSGGRWPGYMSLLGAATWPSWRTRPMASWLPGGRKAT</variation>
    <location>
        <begin position="120"/>
        <end position="347"/>
    </location>
</feature>
<feature type="sequence variant" id="VAR_022452" description="In dbSNP:rs2073924." evidence="5 6 7 9">
    <original>L</original>
    <variation>F</variation>
    <location>
        <position position="20"/>
    </location>
</feature>
<feature type="sequence variant" id="VAR_025068" description="In dbSNP:rs35578482." evidence="9">
    <original>S</original>
    <variation>G</variation>
    <location>
        <position position="21"/>
    </location>
</feature>
<feature type="sequence variant" id="VAR_025069" description="In dbSNP:rs12350913." evidence="9">
    <original>L</original>
    <variation>P</variation>
    <location>
        <position position="79"/>
    </location>
</feature>
<feature type="sequence variant" id="VAR_025070" description="In dbSNP:rs34260370." evidence="9">
    <original>R</original>
    <variation>W</variation>
    <location>
        <position position="163"/>
    </location>
</feature>
<feature type="sequence variant" id="VAR_025071" description="In dbSNP:rs34903033." evidence="9">
    <original>D</original>
    <variation>N</variation>
    <location>
        <position position="200"/>
    </location>
</feature>
<feature type="sequence variant" id="VAR_025072" description="In dbSNP:rs35366884." evidence="9">
    <original>Q</original>
    <variation>P</variation>
    <location>
        <position position="238"/>
    </location>
</feature>
<feature type="sequence variant" id="VAR_025073" description="In dbSNP:rs35184631." evidence="9">
    <original>T</original>
    <variation>I</variation>
    <location>
        <position position="248"/>
    </location>
</feature>
<feature type="sequence variant" id="VAR_025074" description="In dbSNP:rs35403335." evidence="9">
    <original>I</original>
    <variation>F</variation>
    <location>
        <position position="291"/>
    </location>
</feature>
<feature type="sequence variant" id="VAR_085166" description="Found in FORS blood group carriers; reactivates Forssman antigen synthesis and expression in erythrocytes; dbSNP:rs375748588." evidence="8">
    <original>R</original>
    <variation>Q</variation>
    <location>
        <position position="296"/>
    </location>
</feature>
<feature type="sequence conflict" description="In Ref. 1; AAF06145." evidence="11" ref="1">
    <original>R</original>
    <variation>Q</variation>
    <location>
        <position position="163"/>
    </location>
</feature>
<feature type="sequence conflict" description="In Ref. 1; AAF06145." evidence="11" ref="1">
    <original>L</original>
    <variation>F</variation>
    <location>
        <position position="202"/>
    </location>
</feature>
<feature type="sequence conflict" description="In Ref. 1; AAF06145." evidence="11" ref="1">
    <original>S</original>
    <variation>R</variation>
    <location>
        <position position="254"/>
    </location>
</feature>